<keyword id="KW-0131">Cell cycle</keyword>
<keyword id="KW-0132">Cell division</keyword>
<keyword id="KW-0574">Periplasm</keyword>
<keyword id="KW-0732">Signal</keyword>
<accession>Q15RP1</accession>
<name>TOLB_PSEA6</name>
<proteinExistence type="inferred from homology"/>
<gene>
    <name evidence="1" type="primary">tolB</name>
    <name type="ordered locus">Patl_2939</name>
</gene>
<feature type="signal peptide" evidence="1">
    <location>
        <begin position="1"/>
        <end position="23"/>
    </location>
</feature>
<feature type="chain" id="PRO_5000125641" description="Tol-Pal system protein TolB" evidence="1">
    <location>
        <begin position="24"/>
        <end position="451"/>
    </location>
</feature>
<dbReference type="EMBL" id="CP000388">
    <property type="protein sequence ID" value="ABG41447.1"/>
    <property type="molecule type" value="Genomic_DNA"/>
</dbReference>
<dbReference type="RefSeq" id="WP_011575702.1">
    <property type="nucleotide sequence ID" value="NC_008228.1"/>
</dbReference>
<dbReference type="SMR" id="Q15RP1"/>
<dbReference type="STRING" id="342610.Patl_2939"/>
<dbReference type="KEGG" id="pat:Patl_2939"/>
<dbReference type="eggNOG" id="COG0823">
    <property type="taxonomic scope" value="Bacteria"/>
</dbReference>
<dbReference type="HOGENOM" id="CLU_047123_0_0_6"/>
<dbReference type="OrthoDB" id="9802240at2"/>
<dbReference type="Proteomes" id="UP000001981">
    <property type="component" value="Chromosome"/>
</dbReference>
<dbReference type="GO" id="GO:0042597">
    <property type="term" value="C:periplasmic space"/>
    <property type="evidence" value="ECO:0007669"/>
    <property type="project" value="UniProtKB-SubCell"/>
</dbReference>
<dbReference type="GO" id="GO:0051301">
    <property type="term" value="P:cell division"/>
    <property type="evidence" value="ECO:0007669"/>
    <property type="project" value="UniProtKB-UniRule"/>
</dbReference>
<dbReference type="GO" id="GO:0017038">
    <property type="term" value="P:protein import"/>
    <property type="evidence" value="ECO:0007669"/>
    <property type="project" value="InterPro"/>
</dbReference>
<dbReference type="Gene3D" id="2.120.10.30">
    <property type="entry name" value="TolB, C-terminal domain"/>
    <property type="match status" value="1"/>
</dbReference>
<dbReference type="Gene3D" id="3.40.50.10070">
    <property type="entry name" value="TolB, N-terminal domain"/>
    <property type="match status" value="1"/>
</dbReference>
<dbReference type="HAMAP" id="MF_00671">
    <property type="entry name" value="TolB"/>
    <property type="match status" value="1"/>
</dbReference>
<dbReference type="InterPro" id="IPR011042">
    <property type="entry name" value="6-blade_b-propeller_TolB-like"/>
</dbReference>
<dbReference type="InterPro" id="IPR011659">
    <property type="entry name" value="PD40"/>
</dbReference>
<dbReference type="InterPro" id="IPR014167">
    <property type="entry name" value="Tol-Pal_TolB"/>
</dbReference>
<dbReference type="InterPro" id="IPR007195">
    <property type="entry name" value="TolB_N"/>
</dbReference>
<dbReference type="NCBIfam" id="TIGR02800">
    <property type="entry name" value="propeller_TolB"/>
    <property type="match status" value="1"/>
</dbReference>
<dbReference type="PANTHER" id="PTHR36842:SF1">
    <property type="entry name" value="PROTEIN TOLB"/>
    <property type="match status" value="1"/>
</dbReference>
<dbReference type="PANTHER" id="PTHR36842">
    <property type="entry name" value="PROTEIN TOLB HOMOLOG"/>
    <property type="match status" value="1"/>
</dbReference>
<dbReference type="Pfam" id="PF07676">
    <property type="entry name" value="PD40"/>
    <property type="match status" value="4"/>
</dbReference>
<dbReference type="Pfam" id="PF04052">
    <property type="entry name" value="TolB_N"/>
    <property type="match status" value="1"/>
</dbReference>
<dbReference type="SUPFAM" id="SSF52964">
    <property type="entry name" value="TolB, N-terminal domain"/>
    <property type="match status" value="1"/>
</dbReference>
<dbReference type="SUPFAM" id="SSF69304">
    <property type="entry name" value="Tricorn protease N-terminal domain"/>
    <property type="match status" value="1"/>
</dbReference>
<organism>
    <name type="scientific">Pseudoalteromonas atlantica (strain T6c / ATCC BAA-1087)</name>
    <dbReference type="NCBI Taxonomy" id="3042615"/>
    <lineage>
        <taxon>Bacteria</taxon>
        <taxon>Pseudomonadati</taxon>
        <taxon>Pseudomonadota</taxon>
        <taxon>Gammaproteobacteria</taxon>
        <taxon>Alteromonadales</taxon>
        <taxon>Alteromonadaceae</taxon>
        <taxon>Paraglaciecola</taxon>
    </lineage>
</organism>
<comment type="function">
    <text evidence="1">Part of the Tol-Pal system, which plays a role in outer membrane invagination during cell division and is important for maintaining outer membrane integrity.</text>
</comment>
<comment type="subunit">
    <text evidence="1">The Tol-Pal system is composed of five core proteins: the inner membrane proteins TolA, TolQ and TolR, the periplasmic protein TolB and the outer membrane protein Pal. They form a network linking the inner and outer membranes and the peptidoglycan layer.</text>
</comment>
<comment type="subcellular location">
    <subcellularLocation>
        <location evidence="1">Periplasm</location>
    </subcellularLocation>
</comment>
<comment type="similarity">
    <text evidence="1">Belongs to the TolB family.</text>
</comment>
<sequence length="451" mass="49710">MTRLTRVLTFLSVVLTASSQASLEIVITEGIDSARPIAIVPFKWNGPGQMPESLSEVVSGDLLRSGKFSPIDSTDMPGQPHNDNELDYSAWAATGVEAILVGSVTPEGPDRYRVNFTLVDAIRGQITGGNARALSGGKLTNSNDHILDSRQTVITGQGFRQYAHRISDVVYEKLTGEKGAFMTRIAYVVVRDRKTNEFPYQLVVADYDGVNETMLLRSKEPLMSPSWSPDGTKLAYVTFENKRSQIYIQDLYTMSRTQMTDFPGINSAPVFSPNGRQLAMVLSKDGNPEIYVMDVASKRLERITRNRAIDTEPSWTPDGKSLIFSSERGGKPQIYRVDLASNNVRRVTFDGEMNLGGTITPDGGRMVMVNRTRGNYHIAAQDLENGNIQVLTKTYLDESPSIAPNGSMIIYSTLHQGKQVLSLVSLDGRFKARLPASDGQVKSPSWSPFLL</sequence>
<evidence type="ECO:0000255" key="1">
    <source>
        <dbReference type="HAMAP-Rule" id="MF_00671"/>
    </source>
</evidence>
<protein>
    <recommendedName>
        <fullName evidence="1">Tol-Pal system protein TolB</fullName>
    </recommendedName>
</protein>
<reference key="1">
    <citation type="submission" date="2006-06" db="EMBL/GenBank/DDBJ databases">
        <title>Complete sequence of Pseudoalteromonas atlantica T6c.</title>
        <authorList>
            <consortium name="US DOE Joint Genome Institute"/>
            <person name="Copeland A."/>
            <person name="Lucas S."/>
            <person name="Lapidus A."/>
            <person name="Barry K."/>
            <person name="Detter J.C."/>
            <person name="Glavina del Rio T."/>
            <person name="Hammon N."/>
            <person name="Israni S."/>
            <person name="Dalin E."/>
            <person name="Tice H."/>
            <person name="Pitluck S."/>
            <person name="Saunders E."/>
            <person name="Brettin T."/>
            <person name="Bruce D."/>
            <person name="Han C."/>
            <person name="Tapia R."/>
            <person name="Gilna P."/>
            <person name="Schmutz J."/>
            <person name="Larimer F."/>
            <person name="Land M."/>
            <person name="Hauser L."/>
            <person name="Kyrpides N."/>
            <person name="Kim E."/>
            <person name="Karls A.C."/>
            <person name="Bartlett D."/>
            <person name="Higgins B.P."/>
            <person name="Richardson P."/>
        </authorList>
    </citation>
    <scope>NUCLEOTIDE SEQUENCE [LARGE SCALE GENOMIC DNA]</scope>
    <source>
        <strain>T6c / ATCC BAA-1087</strain>
    </source>
</reference>